<sequence>MAYDVTGLWLESDLTADEEAFVSFYTSRTGTLTLVPGGTGGYYLLWITFRRPPTSREERERRDVEIQTVLAVLSPLLGYPHVIRRSPPRGSERVVSFGYGPNINHRPTTLSTELGVLLRELGLQEWARVEVGRHLVSKITQTLLEPHPPQFIRAFTQNTDLVPYEGLEVPEGPQPVARPHIEDDVIMQAVMISLGADLLPLAVQASTGDNYNVARYFVIPGRCTMERWPWNCARQAFGIHGAYTHVHSSVQRGIRGLGNLLFHSTLFPGGQTQGALTGLYATEPALGPRAHSRFRRIFAKGVQQAEMLQGAGVPTLGGFLKTVRTIATTPGNALAVCSISTTTSKECISLRRMIPQQTVVCLGRFEPTDGPDTYPNLYRDSSDNAVRILETLKLVQRLAKGPIFSGLNRSHDPAPVVRHLQALAPRTGLELFVSKLPDEVRAHLPADPAAGPDAVEAAVAEHFLNVYCSLVFAVVAESGAVPGDLGETPLEVLQRAARLCACQITVLGRTSEQPGIRIVDDLTGETTRVFSVDQPSSTPPSPWLALSDGVRVSGHPEDVDWGLFATGSTIHQLLRHATVGSKEFFTRHMDRCSNGLIAQQAGVGPLDIPVSDYHLVLHSSMLAERVAPRVPDTVEAITPSMANLLHKDFETWVKALPQELLPVPAWRGQAMAMGEQAYKMATNVSTGATYAITEALTNLMFSPVSKLQDVVLTGAVAWSPEDHQAGLLQECLFACKEFCRELGVALSISSAASSPTLSERHVRITQQQETVEVLPFNSVVFTSWAEVKGSRYRVTPDVKVEGNALVYLAVNQSCLIAGSTFEHNFLASRHPIPPLNPSTVASLFMLVKYLMSKRLIVSGHDIGDGGLLPSAIEMALAGCRGLQLSLPAHPNPLELMVSETPGALVEVPQVHLSEVLRAARDYRCVAHPLGTVGPEGQGNNVTILQNETVVFQETLTSLQVSWTSFSDEMWNLVTPPLHPLEDMHRKDLGRLEHHLGSLRAMCLGSQLRLFSCPTSPRRVAALVLPGSSAPYALMAALQNTGFEVATVTVEELKRGQSLSGFSGLITCLRTGCQASYASARGWVLALCNDPTCASTLTEFLNRPDTFSICCGEVGFQLLVALGVVGRSESSPYTYGPTPPQRWAVNLETNVSKLYDSHWLNIQIPQNTKSVFLRVLRGTVLPSWAQGEYLGVRYEQDALEYILRQRGEITLTYHGNAADETLPARHYPRNPTGNSTVAGLTSSDGRHAALIIDPSLMFHPWQWQHVPPDLTPLSMSPWAMAFQSIYLWSVKKINDHH</sequence>
<feature type="chain" id="PRO_0000423842" description="Protein ORF75">
    <location>
        <begin position="1"/>
        <end position="1296"/>
    </location>
</feature>
<comment type="subcellular location">
    <subcellularLocation>
        <location evidence="1">Virion tegument</location>
    </subcellularLocation>
</comment>
<proteinExistence type="predicted"/>
<organismHost>
    <name type="scientific">Homo sapiens</name>
    <name type="common">Human</name>
    <dbReference type="NCBI Taxonomy" id="9606"/>
</organismHost>
<organism>
    <name type="scientific">Human herpesvirus 8 type P (isolate GK18)</name>
    <name type="common">HHV-8</name>
    <name type="synonym">Kaposi's sarcoma-associated herpesvirus</name>
    <dbReference type="NCBI Taxonomy" id="868565"/>
    <lineage>
        <taxon>Viruses</taxon>
        <taxon>Duplodnaviria</taxon>
        <taxon>Heunggongvirae</taxon>
        <taxon>Peploviricota</taxon>
        <taxon>Herviviricetes</taxon>
        <taxon>Herpesvirales</taxon>
        <taxon>Orthoherpesviridae</taxon>
        <taxon>Gammaherpesvirinae</taxon>
        <taxon>Rhadinovirus</taxon>
        <taxon>Rhadinovirus humangamma8</taxon>
        <taxon>Human herpesvirus 8</taxon>
    </lineage>
</organism>
<accession>Q9QR70</accession>
<protein>
    <recommendedName>
        <fullName>Protein ORF75</fullName>
    </recommendedName>
</protein>
<evidence type="ECO:0000305" key="1"/>
<dbReference type="EMBL" id="AF148805">
    <property type="protein sequence ID" value="AAD46504.1"/>
    <property type="molecule type" value="Genomic_DNA"/>
</dbReference>
<dbReference type="RefSeq" id="YP_001129434.1">
    <property type="nucleotide sequence ID" value="NC_009333.1"/>
</dbReference>
<dbReference type="SMR" id="Q9QR70"/>
<dbReference type="IntAct" id="Q9QR70">
    <property type="interactions" value="1"/>
</dbReference>
<dbReference type="KEGG" id="vg:4961476"/>
<dbReference type="Proteomes" id="UP000000942">
    <property type="component" value="Segment"/>
</dbReference>
<dbReference type="GO" id="GO:0043657">
    <property type="term" value="C:host cell"/>
    <property type="evidence" value="ECO:0007669"/>
    <property type="project" value="GOC"/>
</dbReference>
<dbReference type="GO" id="GO:0019033">
    <property type="term" value="C:viral tegument"/>
    <property type="evidence" value="ECO:0007669"/>
    <property type="project" value="UniProtKB-SubCell"/>
</dbReference>
<dbReference type="GO" id="GO:0004642">
    <property type="term" value="F:phosphoribosylformylglycinamidine synthase activity"/>
    <property type="evidence" value="ECO:0007669"/>
    <property type="project" value="TreeGrafter"/>
</dbReference>
<dbReference type="GO" id="GO:0075733">
    <property type="term" value="P:intracellular transport of virus"/>
    <property type="evidence" value="ECO:0007669"/>
    <property type="project" value="InterPro"/>
</dbReference>
<dbReference type="GO" id="GO:0006164">
    <property type="term" value="P:purine nucleotide biosynthetic process"/>
    <property type="evidence" value="ECO:0007669"/>
    <property type="project" value="TreeGrafter"/>
</dbReference>
<dbReference type="Gene3D" id="3.40.50.880">
    <property type="match status" value="1"/>
</dbReference>
<dbReference type="Gene3D" id="3.90.650.10">
    <property type="entry name" value="PurM-like C-terminal domain"/>
    <property type="match status" value="1"/>
</dbReference>
<dbReference type="Gene3D" id="3.30.1330.10">
    <property type="entry name" value="PurM-like, N-terminal domain"/>
    <property type="match status" value="1"/>
</dbReference>
<dbReference type="InterPro" id="IPR029062">
    <property type="entry name" value="Class_I_gatase-like"/>
</dbReference>
<dbReference type="InterPro" id="IPR055181">
    <property type="entry name" value="FGAR-AT_PurM_N-like"/>
</dbReference>
<dbReference type="InterPro" id="IPR010077">
    <property type="entry name" value="Herpes_virus_tegument"/>
</dbReference>
<dbReference type="InterPro" id="IPR010918">
    <property type="entry name" value="PurM-like_C_dom"/>
</dbReference>
<dbReference type="InterPro" id="IPR036676">
    <property type="entry name" value="PurM-like_C_sf"/>
</dbReference>
<dbReference type="InterPro" id="IPR036921">
    <property type="entry name" value="PurM-like_N_sf"/>
</dbReference>
<dbReference type="InterPro" id="IPR024346">
    <property type="entry name" value="Tegument_herpes_virus_N"/>
</dbReference>
<dbReference type="NCBIfam" id="TIGR01739">
    <property type="entry name" value="tegu_FGAM_synt"/>
    <property type="match status" value="1"/>
</dbReference>
<dbReference type="PANTHER" id="PTHR10099">
    <property type="entry name" value="PHOSPHORIBOSYLFORMYLGLYCINAMIDINE SYNTHASE"/>
    <property type="match status" value="1"/>
</dbReference>
<dbReference type="PANTHER" id="PTHR10099:SF1">
    <property type="entry name" value="PHOSPHORIBOSYLFORMYLGLYCINAMIDINE SYNTHASE"/>
    <property type="match status" value="1"/>
</dbReference>
<dbReference type="Pfam" id="PF02769">
    <property type="entry name" value="AIRS_C"/>
    <property type="match status" value="1"/>
</dbReference>
<dbReference type="Pfam" id="PF22689">
    <property type="entry name" value="FGAR-AT_PurM_N-like"/>
    <property type="match status" value="1"/>
</dbReference>
<dbReference type="Pfam" id="PF13507">
    <property type="entry name" value="GATase_5"/>
    <property type="match status" value="1"/>
</dbReference>
<dbReference type="Pfam" id="PF12818">
    <property type="entry name" value="Tegument_dsDNA"/>
    <property type="match status" value="1"/>
</dbReference>
<dbReference type="SMART" id="SM01211">
    <property type="entry name" value="GATase_5"/>
    <property type="match status" value="1"/>
</dbReference>
<dbReference type="SUPFAM" id="SSF52317">
    <property type="entry name" value="Class I glutamine amidotransferase-like"/>
    <property type="match status" value="1"/>
</dbReference>
<dbReference type="SUPFAM" id="SSF56042">
    <property type="entry name" value="PurM C-terminal domain-like"/>
    <property type="match status" value="1"/>
</dbReference>
<dbReference type="SUPFAM" id="SSF55326">
    <property type="entry name" value="PurM N-terminal domain-like"/>
    <property type="match status" value="1"/>
</dbReference>
<reference key="1">
    <citation type="journal article" date="1999" name="J. Virol.">
        <title>Identification of a spliced gene from Kaposi's sarcoma-associated herpesvirus encoding a protein with similarities to latent membrane proteins 1 and 2A of Epstein-Barr virus.</title>
        <authorList>
            <person name="Glenn M."/>
            <person name="Rainbow L."/>
            <person name="Aurade F."/>
            <person name="Davison A."/>
            <person name="Schulz T.F."/>
        </authorList>
    </citation>
    <scope>NUCLEOTIDE SEQUENCE [LARGE SCALE GENOMIC DNA]</scope>
</reference>
<reference key="2">
    <citation type="journal article" date="2006" name="J. Gen. Virol.">
        <title>Kaposi's sarcoma-associated herpesvirus immune modulation: an overview.</title>
        <authorList>
            <person name="Rezaee S.A.R."/>
            <person name="Cunningham C."/>
            <person name="Davison A.J."/>
            <person name="Blackbourn D.J."/>
        </authorList>
    </citation>
    <scope>NUCLEOTIDE SEQUENCE [LARGE SCALE GENOMIC DNA]</scope>
</reference>
<name>ORF75_HHV8P</name>
<keyword id="KW-1185">Reference proteome</keyword>
<keyword id="KW-0946">Virion</keyword>
<keyword id="KW-0920">Virion tegument</keyword>
<gene>
    <name type="primary">ORF75</name>
</gene>